<accession>C3PKQ1</accession>
<dbReference type="EMBL" id="CP001601">
    <property type="protein sequence ID" value="ACP31987.1"/>
    <property type="molecule type" value="Genomic_DNA"/>
</dbReference>
<dbReference type="RefSeq" id="WP_003848085.1">
    <property type="nucleotide sequence ID" value="NZ_ACLH01000066.1"/>
</dbReference>
<dbReference type="SMR" id="C3PKQ1"/>
<dbReference type="STRING" id="548476.cauri_0388"/>
<dbReference type="GeneID" id="97331075"/>
<dbReference type="KEGG" id="car:cauri_0388"/>
<dbReference type="eggNOG" id="COG0051">
    <property type="taxonomic scope" value="Bacteria"/>
</dbReference>
<dbReference type="HOGENOM" id="CLU_122625_1_3_11"/>
<dbReference type="OrthoDB" id="9804464at2"/>
<dbReference type="Proteomes" id="UP000002077">
    <property type="component" value="Chromosome"/>
</dbReference>
<dbReference type="GO" id="GO:1990904">
    <property type="term" value="C:ribonucleoprotein complex"/>
    <property type="evidence" value="ECO:0007669"/>
    <property type="project" value="UniProtKB-KW"/>
</dbReference>
<dbReference type="GO" id="GO:0005840">
    <property type="term" value="C:ribosome"/>
    <property type="evidence" value="ECO:0007669"/>
    <property type="project" value="UniProtKB-KW"/>
</dbReference>
<dbReference type="GO" id="GO:0003735">
    <property type="term" value="F:structural constituent of ribosome"/>
    <property type="evidence" value="ECO:0007669"/>
    <property type="project" value="InterPro"/>
</dbReference>
<dbReference type="GO" id="GO:0000049">
    <property type="term" value="F:tRNA binding"/>
    <property type="evidence" value="ECO:0007669"/>
    <property type="project" value="UniProtKB-UniRule"/>
</dbReference>
<dbReference type="GO" id="GO:0006412">
    <property type="term" value="P:translation"/>
    <property type="evidence" value="ECO:0007669"/>
    <property type="project" value="UniProtKB-UniRule"/>
</dbReference>
<dbReference type="FunFam" id="3.30.70.600:FF:000001">
    <property type="entry name" value="30S ribosomal protein S10"/>
    <property type="match status" value="1"/>
</dbReference>
<dbReference type="Gene3D" id="3.30.70.600">
    <property type="entry name" value="Ribosomal protein S10 domain"/>
    <property type="match status" value="1"/>
</dbReference>
<dbReference type="HAMAP" id="MF_00508">
    <property type="entry name" value="Ribosomal_uS10"/>
    <property type="match status" value="1"/>
</dbReference>
<dbReference type="InterPro" id="IPR001848">
    <property type="entry name" value="Ribosomal_uS10"/>
</dbReference>
<dbReference type="InterPro" id="IPR018268">
    <property type="entry name" value="Ribosomal_uS10_CS"/>
</dbReference>
<dbReference type="InterPro" id="IPR027486">
    <property type="entry name" value="Ribosomal_uS10_dom"/>
</dbReference>
<dbReference type="InterPro" id="IPR036838">
    <property type="entry name" value="Ribosomal_uS10_dom_sf"/>
</dbReference>
<dbReference type="NCBIfam" id="NF001861">
    <property type="entry name" value="PRK00596.1"/>
    <property type="match status" value="1"/>
</dbReference>
<dbReference type="NCBIfam" id="TIGR01049">
    <property type="entry name" value="rpsJ_bact"/>
    <property type="match status" value="1"/>
</dbReference>
<dbReference type="PANTHER" id="PTHR11700">
    <property type="entry name" value="30S RIBOSOMAL PROTEIN S10 FAMILY MEMBER"/>
    <property type="match status" value="1"/>
</dbReference>
<dbReference type="Pfam" id="PF00338">
    <property type="entry name" value="Ribosomal_S10"/>
    <property type="match status" value="1"/>
</dbReference>
<dbReference type="PRINTS" id="PR00971">
    <property type="entry name" value="RIBOSOMALS10"/>
</dbReference>
<dbReference type="SMART" id="SM01403">
    <property type="entry name" value="Ribosomal_S10"/>
    <property type="match status" value="1"/>
</dbReference>
<dbReference type="SUPFAM" id="SSF54999">
    <property type="entry name" value="Ribosomal protein S10"/>
    <property type="match status" value="1"/>
</dbReference>
<dbReference type="PROSITE" id="PS00361">
    <property type="entry name" value="RIBOSOMAL_S10"/>
    <property type="match status" value="1"/>
</dbReference>
<comment type="function">
    <text evidence="1">Involved in the binding of tRNA to the ribosomes.</text>
</comment>
<comment type="subunit">
    <text evidence="1">Part of the 30S ribosomal subunit.</text>
</comment>
<comment type="similarity">
    <text evidence="1">Belongs to the universal ribosomal protein uS10 family.</text>
</comment>
<name>RS10_CORA7</name>
<feature type="chain" id="PRO_1000196302" description="Small ribosomal subunit protein uS10">
    <location>
        <begin position="1"/>
        <end position="101"/>
    </location>
</feature>
<gene>
    <name evidence="1" type="primary">rpsJ</name>
    <name type="ordered locus">cauri_0388</name>
</gene>
<evidence type="ECO:0000255" key="1">
    <source>
        <dbReference type="HAMAP-Rule" id="MF_00508"/>
    </source>
</evidence>
<evidence type="ECO:0000305" key="2"/>
<reference key="1">
    <citation type="journal article" date="2010" name="BMC Genomics">
        <title>Complete genome sequence and lifestyle of black-pigmented Corynebacterium aurimucosum ATCC 700975 (formerly C. nigricans CN-1) isolated from a vaginal swab of a woman with spontaneous abortion.</title>
        <authorList>
            <person name="Trost E."/>
            <person name="Gotker S."/>
            <person name="Schneider J."/>
            <person name="Schneiker-Bekel S."/>
            <person name="Szczepanowski R."/>
            <person name="Tilker A."/>
            <person name="Viehoever P."/>
            <person name="Arnold W."/>
            <person name="Bekel T."/>
            <person name="Blom J."/>
            <person name="Gartemann K.H."/>
            <person name="Linke B."/>
            <person name="Goesmann A."/>
            <person name="Puhler A."/>
            <person name="Shukla S.K."/>
            <person name="Tauch A."/>
        </authorList>
    </citation>
    <scope>NUCLEOTIDE SEQUENCE [LARGE SCALE GENOMIC DNA]</scope>
    <source>
        <strain>ATCC 700975 / DSM 44827 / CIP 107346 / CN-1</strain>
    </source>
</reference>
<organism>
    <name type="scientific">Corynebacterium aurimucosum (strain ATCC 700975 / DSM 44827 / CIP 107346 / CN-1)</name>
    <name type="common">Corynebacterium nigricans</name>
    <dbReference type="NCBI Taxonomy" id="548476"/>
    <lineage>
        <taxon>Bacteria</taxon>
        <taxon>Bacillati</taxon>
        <taxon>Actinomycetota</taxon>
        <taxon>Actinomycetes</taxon>
        <taxon>Mycobacteriales</taxon>
        <taxon>Corynebacteriaceae</taxon>
        <taxon>Corynebacterium</taxon>
    </lineage>
</organism>
<protein>
    <recommendedName>
        <fullName evidence="1">Small ribosomal subunit protein uS10</fullName>
    </recommendedName>
    <alternativeName>
        <fullName evidence="2">30S ribosomal protein S10</fullName>
    </alternativeName>
</protein>
<sequence length="101" mass="11442">MAGQKIRIRLKAYDHEAIDASAKKIVETVTRTGARVVGPVPLPTEKNVYAVIRSPHKYKDSREHFEMRTHKRLIDILDPTPKTVDALMRIDLPASVDVNIQ</sequence>
<proteinExistence type="inferred from homology"/>
<keyword id="KW-1185">Reference proteome</keyword>
<keyword id="KW-0687">Ribonucleoprotein</keyword>
<keyword id="KW-0689">Ribosomal protein</keyword>